<accession>A1S8M3</accession>
<feature type="chain" id="PRO_1000084925" description="DNA polymerase IV">
    <location>
        <begin position="1"/>
        <end position="355"/>
    </location>
</feature>
<feature type="domain" description="UmuC" evidence="1">
    <location>
        <begin position="4"/>
        <end position="185"/>
    </location>
</feature>
<feature type="active site" evidence="1">
    <location>
        <position position="104"/>
    </location>
</feature>
<feature type="binding site" evidence="1">
    <location>
        <position position="8"/>
    </location>
    <ligand>
        <name>Mg(2+)</name>
        <dbReference type="ChEBI" id="CHEBI:18420"/>
    </ligand>
</feature>
<feature type="binding site" evidence="1">
    <location>
        <position position="103"/>
    </location>
    <ligand>
        <name>Mg(2+)</name>
        <dbReference type="ChEBI" id="CHEBI:18420"/>
    </ligand>
</feature>
<feature type="site" description="Substrate discrimination" evidence="1">
    <location>
        <position position="13"/>
    </location>
</feature>
<protein>
    <recommendedName>
        <fullName evidence="1">DNA polymerase IV</fullName>
        <shortName evidence="1">Pol IV</shortName>
        <ecNumber evidence="1">2.7.7.7</ecNumber>
    </recommendedName>
</protein>
<dbReference type="EC" id="2.7.7.7" evidence="1"/>
<dbReference type="EMBL" id="CP000507">
    <property type="protein sequence ID" value="ABM00730.1"/>
    <property type="molecule type" value="Genomic_DNA"/>
</dbReference>
<dbReference type="RefSeq" id="WP_011760636.1">
    <property type="nucleotide sequence ID" value="NC_008700.1"/>
</dbReference>
<dbReference type="SMR" id="A1S8M3"/>
<dbReference type="STRING" id="326297.Sama_2527"/>
<dbReference type="KEGG" id="saz:Sama_2527"/>
<dbReference type="eggNOG" id="COG0389">
    <property type="taxonomic scope" value="Bacteria"/>
</dbReference>
<dbReference type="HOGENOM" id="CLU_012348_1_2_6"/>
<dbReference type="OrthoDB" id="9808813at2"/>
<dbReference type="Proteomes" id="UP000009175">
    <property type="component" value="Chromosome"/>
</dbReference>
<dbReference type="GO" id="GO:0005829">
    <property type="term" value="C:cytosol"/>
    <property type="evidence" value="ECO:0007669"/>
    <property type="project" value="TreeGrafter"/>
</dbReference>
<dbReference type="GO" id="GO:0003684">
    <property type="term" value="F:damaged DNA binding"/>
    <property type="evidence" value="ECO:0007669"/>
    <property type="project" value="InterPro"/>
</dbReference>
<dbReference type="GO" id="GO:0003887">
    <property type="term" value="F:DNA-directed DNA polymerase activity"/>
    <property type="evidence" value="ECO:0007669"/>
    <property type="project" value="UniProtKB-UniRule"/>
</dbReference>
<dbReference type="GO" id="GO:0000287">
    <property type="term" value="F:magnesium ion binding"/>
    <property type="evidence" value="ECO:0007669"/>
    <property type="project" value="UniProtKB-UniRule"/>
</dbReference>
<dbReference type="GO" id="GO:0006261">
    <property type="term" value="P:DNA-templated DNA replication"/>
    <property type="evidence" value="ECO:0007669"/>
    <property type="project" value="UniProtKB-UniRule"/>
</dbReference>
<dbReference type="GO" id="GO:0042276">
    <property type="term" value="P:error-prone translesion synthesis"/>
    <property type="evidence" value="ECO:0007669"/>
    <property type="project" value="TreeGrafter"/>
</dbReference>
<dbReference type="GO" id="GO:0009432">
    <property type="term" value="P:SOS response"/>
    <property type="evidence" value="ECO:0007669"/>
    <property type="project" value="TreeGrafter"/>
</dbReference>
<dbReference type="CDD" id="cd03586">
    <property type="entry name" value="PolY_Pol_IV_kappa"/>
    <property type="match status" value="1"/>
</dbReference>
<dbReference type="FunFam" id="1.10.150.20:FF:000019">
    <property type="entry name" value="DNA polymerase IV"/>
    <property type="match status" value="1"/>
</dbReference>
<dbReference type="FunFam" id="3.40.1170.60:FF:000001">
    <property type="entry name" value="DNA polymerase IV"/>
    <property type="match status" value="1"/>
</dbReference>
<dbReference type="Gene3D" id="3.30.70.270">
    <property type="match status" value="1"/>
</dbReference>
<dbReference type="Gene3D" id="3.40.1170.60">
    <property type="match status" value="1"/>
</dbReference>
<dbReference type="Gene3D" id="1.10.150.20">
    <property type="entry name" value="5' to 3' exonuclease, C-terminal subdomain"/>
    <property type="match status" value="1"/>
</dbReference>
<dbReference type="Gene3D" id="3.30.1490.100">
    <property type="entry name" value="DNA polymerase, Y-family, little finger domain"/>
    <property type="match status" value="1"/>
</dbReference>
<dbReference type="HAMAP" id="MF_01113">
    <property type="entry name" value="DNApol_IV"/>
    <property type="match status" value="1"/>
</dbReference>
<dbReference type="InterPro" id="IPR043502">
    <property type="entry name" value="DNA/RNA_pol_sf"/>
</dbReference>
<dbReference type="InterPro" id="IPR036775">
    <property type="entry name" value="DNA_pol_Y-fam_lit_finger_sf"/>
</dbReference>
<dbReference type="InterPro" id="IPR017961">
    <property type="entry name" value="DNA_pol_Y-fam_little_finger"/>
</dbReference>
<dbReference type="InterPro" id="IPR050116">
    <property type="entry name" value="DNA_polymerase-Y"/>
</dbReference>
<dbReference type="InterPro" id="IPR022880">
    <property type="entry name" value="DNApol_IV"/>
</dbReference>
<dbReference type="InterPro" id="IPR053848">
    <property type="entry name" value="IMS_HHH_1"/>
</dbReference>
<dbReference type="InterPro" id="IPR043128">
    <property type="entry name" value="Rev_trsase/Diguanyl_cyclase"/>
</dbReference>
<dbReference type="InterPro" id="IPR001126">
    <property type="entry name" value="UmuC"/>
</dbReference>
<dbReference type="NCBIfam" id="NF002677">
    <property type="entry name" value="PRK02406.1"/>
    <property type="match status" value="1"/>
</dbReference>
<dbReference type="PANTHER" id="PTHR11076:SF33">
    <property type="entry name" value="DNA POLYMERASE KAPPA"/>
    <property type="match status" value="1"/>
</dbReference>
<dbReference type="PANTHER" id="PTHR11076">
    <property type="entry name" value="DNA REPAIR POLYMERASE UMUC / TRANSFERASE FAMILY MEMBER"/>
    <property type="match status" value="1"/>
</dbReference>
<dbReference type="Pfam" id="PF00817">
    <property type="entry name" value="IMS"/>
    <property type="match status" value="1"/>
</dbReference>
<dbReference type="Pfam" id="PF11799">
    <property type="entry name" value="IMS_C"/>
    <property type="match status" value="1"/>
</dbReference>
<dbReference type="Pfam" id="PF21999">
    <property type="entry name" value="IMS_HHH_1"/>
    <property type="match status" value="1"/>
</dbReference>
<dbReference type="SUPFAM" id="SSF56672">
    <property type="entry name" value="DNA/RNA polymerases"/>
    <property type="match status" value="1"/>
</dbReference>
<dbReference type="SUPFAM" id="SSF100879">
    <property type="entry name" value="Lesion bypass DNA polymerase (Y-family), little finger domain"/>
    <property type="match status" value="1"/>
</dbReference>
<dbReference type="PROSITE" id="PS50173">
    <property type="entry name" value="UMUC"/>
    <property type="match status" value="1"/>
</dbReference>
<organism>
    <name type="scientific">Shewanella amazonensis (strain ATCC BAA-1098 / SB2B)</name>
    <dbReference type="NCBI Taxonomy" id="326297"/>
    <lineage>
        <taxon>Bacteria</taxon>
        <taxon>Pseudomonadati</taxon>
        <taxon>Pseudomonadota</taxon>
        <taxon>Gammaproteobacteria</taxon>
        <taxon>Alteromonadales</taxon>
        <taxon>Shewanellaceae</taxon>
        <taxon>Shewanella</taxon>
    </lineage>
</organism>
<sequence>MRKIIHIDMDCYFAAVEMRDFPQYRGKPLAVGGSSDRRGVISTCNYEARAFGVRSAMASAYALKLCPNLILVPGRMEVYKAVSQQIREIFSRYTSLIEPLSLDEAYLDVSDCSLYQGSATRIAEAIRSDIFKETGLTASAGVSPIKFVAKVASDLNKPNGQYVVSPDTLMHFVRALSLGKIPGVGKVTEEKLNALGLKTCADVQQVPQTLLTEHFGKFGAVLYERAHGRDERAIVSHRERKSVGVETTLPKDLHTREACLDVLSSLIPELNRRLGRSASGRRIHKLVVKLKFDDFRQTTIESRAEEPSVRLFESLLSQAFVRAEGRGIRLVGIAAGLVCRSEAEQEGSAQLALSL</sequence>
<comment type="function">
    <text evidence="1">Poorly processive, error-prone DNA polymerase involved in untargeted mutagenesis. Copies undamaged DNA at stalled replication forks, which arise in vivo from mismatched or misaligned primer ends. These misaligned primers can be extended by PolIV. Exhibits no 3'-5' exonuclease (proofreading) activity. May be involved in translesional synthesis, in conjunction with the beta clamp from PolIII.</text>
</comment>
<comment type="catalytic activity">
    <reaction evidence="1">
        <text>DNA(n) + a 2'-deoxyribonucleoside 5'-triphosphate = DNA(n+1) + diphosphate</text>
        <dbReference type="Rhea" id="RHEA:22508"/>
        <dbReference type="Rhea" id="RHEA-COMP:17339"/>
        <dbReference type="Rhea" id="RHEA-COMP:17340"/>
        <dbReference type="ChEBI" id="CHEBI:33019"/>
        <dbReference type="ChEBI" id="CHEBI:61560"/>
        <dbReference type="ChEBI" id="CHEBI:173112"/>
        <dbReference type="EC" id="2.7.7.7"/>
    </reaction>
</comment>
<comment type="cofactor">
    <cofactor evidence="1">
        <name>Mg(2+)</name>
        <dbReference type="ChEBI" id="CHEBI:18420"/>
    </cofactor>
    <text evidence="1">Binds 2 magnesium ions per subunit.</text>
</comment>
<comment type="subunit">
    <text evidence="1">Monomer.</text>
</comment>
<comment type="subcellular location">
    <subcellularLocation>
        <location evidence="1">Cytoplasm</location>
    </subcellularLocation>
</comment>
<comment type="similarity">
    <text evidence="1">Belongs to the DNA polymerase type-Y family.</text>
</comment>
<proteinExistence type="inferred from homology"/>
<evidence type="ECO:0000255" key="1">
    <source>
        <dbReference type="HAMAP-Rule" id="MF_01113"/>
    </source>
</evidence>
<keyword id="KW-0963">Cytoplasm</keyword>
<keyword id="KW-0227">DNA damage</keyword>
<keyword id="KW-0234">DNA repair</keyword>
<keyword id="KW-0235">DNA replication</keyword>
<keyword id="KW-0238">DNA-binding</keyword>
<keyword id="KW-0239">DNA-directed DNA polymerase</keyword>
<keyword id="KW-0460">Magnesium</keyword>
<keyword id="KW-0479">Metal-binding</keyword>
<keyword id="KW-0515">Mutator protein</keyword>
<keyword id="KW-0548">Nucleotidyltransferase</keyword>
<keyword id="KW-1185">Reference proteome</keyword>
<keyword id="KW-0808">Transferase</keyword>
<reference key="1">
    <citation type="submission" date="2006-12" db="EMBL/GenBank/DDBJ databases">
        <title>Complete sequence of Shewanella amazonensis SB2B.</title>
        <authorList>
            <consortium name="US DOE Joint Genome Institute"/>
            <person name="Copeland A."/>
            <person name="Lucas S."/>
            <person name="Lapidus A."/>
            <person name="Barry K."/>
            <person name="Detter J.C."/>
            <person name="Glavina del Rio T."/>
            <person name="Hammon N."/>
            <person name="Israni S."/>
            <person name="Dalin E."/>
            <person name="Tice H."/>
            <person name="Pitluck S."/>
            <person name="Munk A.C."/>
            <person name="Brettin T."/>
            <person name="Bruce D."/>
            <person name="Han C."/>
            <person name="Tapia R."/>
            <person name="Gilna P."/>
            <person name="Schmutz J."/>
            <person name="Larimer F."/>
            <person name="Land M."/>
            <person name="Hauser L."/>
            <person name="Kyrpides N."/>
            <person name="Mikhailova N."/>
            <person name="Fredrickson J."/>
            <person name="Richardson P."/>
        </authorList>
    </citation>
    <scope>NUCLEOTIDE SEQUENCE [LARGE SCALE GENOMIC DNA]</scope>
    <source>
        <strain>ATCC BAA-1098 / SB2B</strain>
    </source>
</reference>
<gene>
    <name evidence="1" type="primary">dinB</name>
    <name type="ordered locus">Sama_2527</name>
</gene>
<name>DPO4_SHEAM</name>